<proteinExistence type="inferred from homology"/>
<feature type="chain" id="PRO_1000166293" description="Large ribosomal subunit protein uL15">
    <location>
        <begin position="1"/>
        <end position="144"/>
    </location>
</feature>
<feature type="region of interest" description="Disordered" evidence="2">
    <location>
        <begin position="1"/>
        <end position="54"/>
    </location>
</feature>
<feature type="compositionally biased region" description="Gly residues" evidence="2">
    <location>
        <begin position="21"/>
        <end position="31"/>
    </location>
</feature>
<organism>
    <name type="scientific">Escherichia coli O127:H6 (strain E2348/69 / EPEC)</name>
    <dbReference type="NCBI Taxonomy" id="574521"/>
    <lineage>
        <taxon>Bacteria</taxon>
        <taxon>Pseudomonadati</taxon>
        <taxon>Pseudomonadota</taxon>
        <taxon>Gammaproteobacteria</taxon>
        <taxon>Enterobacterales</taxon>
        <taxon>Enterobacteriaceae</taxon>
        <taxon>Escherichia</taxon>
    </lineage>
</organism>
<gene>
    <name evidence="1" type="primary">rplO</name>
    <name type="ordered locus">E2348C_3564</name>
</gene>
<accession>B7UK25</accession>
<keyword id="KW-1185">Reference proteome</keyword>
<keyword id="KW-0687">Ribonucleoprotein</keyword>
<keyword id="KW-0689">Ribosomal protein</keyword>
<keyword id="KW-0694">RNA-binding</keyword>
<keyword id="KW-0699">rRNA-binding</keyword>
<dbReference type="EMBL" id="FM180568">
    <property type="protein sequence ID" value="CAS11112.1"/>
    <property type="molecule type" value="Genomic_DNA"/>
</dbReference>
<dbReference type="RefSeq" id="WP_001238917.1">
    <property type="nucleotide sequence ID" value="NC_011601.1"/>
</dbReference>
<dbReference type="SMR" id="B7UK25"/>
<dbReference type="GeneID" id="93778686"/>
<dbReference type="KEGG" id="ecg:E2348C_3564"/>
<dbReference type="HOGENOM" id="CLU_055188_4_2_6"/>
<dbReference type="Proteomes" id="UP000008205">
    <property type="component" value="Chromosome"/>
</dbReference>
<dbReference type="GO" id="GO:0022625">
    <property type="term" value="C:cytosolic large ribosomal subunit"/>
    <property type="evidence" value="ECO:0007669"/>
    <property type="project" value="TreeGrafter"/>
</dbReference>
<dbReference type="GO" id="GO:0019843">
    <property type="term" value="F:rRNA binding"/>
    <property type="evidence" value="ECO:0007669"/>
    <property type="project" value="UniProtKB-UniRule"/>
</dbReference>
<dbReference type="GO" id="GO:0003735">
    <property type="term" value="F:structural constituent of ribosome"/>
    <property type="evidence" value="ECO:0007669"/>
    <property type="project" value="InterPro"/>
</dbReference>
<dbReference type="GO" id="GO:0006412">
    <property type="term" value="P:translation"/>
    <property type="evidence" value="ECO:0007669"/>
    <property type="project" value="UniProtKB-UniRule"/>
</dbReference>
<dbReference type="FunFam" id="3.100.10.10:FF:000003">
    <property type="entry name" value="50S ribosomal protein L15"/>
    <property type="match status" value="1"/>
</dbReference>
<dbReference type="Gene3D" id="3.100.10.10">
    <property type="match status" value="1"/>
</dbReference>
<dbReference type="HAMAP" id="MF_01341">
    <property type="entry name" value="Ribosomal_uL15"/>
    <property type="match status" value="1"/>
</dbReference>
<dbReference type="InterPro" id="IPR030878">
    <property type="entry name" value="Ribosomal_uL15"/>
</dbReference>
<dbReference type="InterPro" id="IPR021131">
    <property type="entry name" value="Ribosomal_uL15/eL18"/>
</dbReference>
<dbReference type="InterPro" id="IPR036227">
    <property type="entry name" value="Ribosomal_uL15/eL18_sf"/>
</dbReference>
<dbReference type="InterPro" id="IPR005749">
    <property type="entry name" value="Ribosomal_uL15_bac-type"/>
</dbReference>
<dbReference type="InterPro" id="IPR001196">
    <property type="entry name" value="Ribosomal_uL15_CS"/>
</dbReference>
<dbReference type="NCBIfam" id="TIGR01071">
    <property type="entry name" value="rplO_bact"/>
    <property type="match status" value="1"/>
</dbReference>
<dbReference type="PANTHER" id="PTHR12934">
    <property type="entry name" value="50S RIBOSOMAL PROTEIN L15"/>
    <property type="match status" value="1"/>
</dbReference>
<dbReference type="PANTHER" id="PTHR12934:SF11">
    <property type="entry name" value="LARGE RIBOSOMAL SUBUNIT PROTEIN UL15M"/>
    <property type="match status" value="1"/>
</dbReference>
<dbReference type="Pfam" id="PF00828">
    <property type="entry name" value="Ribosomal_L27A"/>
    <property type="match status" value="1"/>
</dbReference>
<dbReference type="SUPFAM" id="SSF52080">
    <property type="entry name" value="Ribosomal proteins L15p and L18e"/>
    <property type="match status" value="1"/>
</dbReference>
<dbReference type="PROSITE" id="PS00475">
    <property type="entry name" value="RIBOSOMAL_L15"/>
    <property type="match status" value="1"/>
</dbReference>
<reference key="1">
    <citation type="journal article" date="2009" name="J. Bacteriol.">
        <title>Complete genome sequence and comparative genome analysis of enteropathogenic Escherichia coli O127:H6 strain E2348/69.</title>
        <authorList>
            <person name="Iguchi A."/>
            <person name="Thomson N.R."/>
            <person name="Ogura Y."/>
            <person name="Saunders D."/>
            <person name="Ooka T."/>
            <person name="Henderson I.R."/>
            <person name="Harris D."/>
            <person name="Asadulghani M."/>
            <person name="Kurokawa K."/>
            <person name="Dean P."/>
            <person name="Kenny B."/>
            <person name="Quail M.A."/>
            <person name="Thurston S."/>
            <person name="Dougan G."/>
            <person name="Hayashi T."/>
            <person name="Parkhill J."/>
            <person name="Frankel G."/>
        </authorList>
    </citation>
    <scope>NUCLEOTIDE SEQUENCE [LARGE SCALE GENOMIC DNA]</scope>
    <source>
        <strain>E2348/69 / EPEC</strain>
    </source>
</reference>
<sequence length="144" mass="14966">MRLNTLSPAEGSKKAGKRLGRGIGSGLGKTGGRGHKGQKSRSGGGVRRGFEGGQMPLYRRLPKFGFTSRKAAITAEVRLSDLAKVEGGVVDLNTLKAANIIGIQIEFAKVILAGEVTTPVTVRGLRVTKGARAAIEAAGGKIEE</sequence>
<name>RL15_ECO27</name>
<evidence type="ECO:0000255" key="1">
    <source>
        <dbReference type="HAMAP-Rule" id="MF_01341"/>
    </source>
</evidence>
<evidence type="ECO:0000256" key="2">
    <source>
        <dbReference type="SAM" id="MobiDB-lite"/>
    </source>
</evidence>
<evidence type="ECO:0000305" key="3"/>
<protein>
    <recommendedName>
        <fullName evidence="1">Large ribosomal subunit protein uL15</fullName>
    </recommendedName>
    <alternativeName>
        <fullName evidence="3">50S ribosomal protein L15</fullName>
    </alternativeName>
</protein>
<comment type="function">
    <text evidence="1">Binds to the 23S rRNA.</text>
</comment>
<comment type="subunit">
    <text evidence="1">Part of the 50S ribosomal subunit.</text>
</comment>
<comment type="similarity">
    <text evidence="1">Belongs to the universal ribosomal protein uL15 family.</text>
</comment>